<sequence>MTPEDFYMALKELGFDLSQKQKDQFQRYFELLVEWNEKINLTAITDKDEVFLKHFYDSLAPVLQGHIKNQSIQLLDIGAGAGFPSLPIKILCPNLDVTIIDSLNRRITFLNFLSDELGLSGVHFYHGRAEDFGQDKAFRAQFDIVTARAVARMQVLSELTIPFLKVGGQLIALKAAAADQELVDARNALNVLFAKPILNENYKLPNGDGRNITIIDKKKETPNKYPRRAGIPNKKPL</sequence>
<name>RSMG_STRTD</name>
<organism>
    <name type="scientific">Streptococcus thermophilus (strain ATCC BAA-491 / LMD-9)</name>
    <dbReference type="NCBI Taxonomy" id="322159"/>
    <lineage>
        <taxon>Bacteria</taxon>
        <taxon>Bacillati</taxon>
        <taxon>Bacillota</taxon>
        <taxon>Bacilli</taxon>
        <taxon>Lactobacillales</taxon>
        <taxon>Streptococcaceae</taxon>
        <taxon>Streptococcus</taxon>
    </lineage>
</organism>
<feature type="chain" id="PRO_1000010229" description="Ribosomal RNA small subunit methyltransferase G">
    <location>
        <begin position="1"/>
        <end position="237"/>
    </location>
</feature>
<feature type="binding site" evidence="1">
    <location>
        <position position="78"/>
    </location>
    <ligand>
        <name>S-adenosyl-L-methionine</name>
        <dbReference type="ChEBI" id="CHEBI:59789"/>
    </ligand>
</feature>
<feature type="binding site" evidence="1">
    <location>
        <position position="83"/>
    </location>
    <ligand>
        <name>S-adenosyl-L-methionine</name>
        <dbReference type="ChEBI" id="CHEBI:59789"/>
    </ligand>
</feature>
<feature type="binding site" evidence="1">
    <location>
        <begin position="129"/>
        <end position="130"/>
    </location>
    <ligand>
        <name>S-adenosyl-L-methionine</name>
        <dbReference type="ChEBI" id="CHEBI:59789"/>
    </ligand>
</feature>
<feature type="binding site" evidence="1">
    <location>
        <position position="148"/>
    </location>
    <ligand>
        <name>S-adenosyl-L-methionine</name>
        <dbReference type="ChEBI" id="CHEBI:59789"/>
    </ligand>
</feature>
<protein>
    <recommendedName>
        <fullName evidence="1">Ribosomal RNA small subunit methyltransferase G</fullName>
        <ecNumber evidence="1">2.1.1.-</ecNumber>
    </recommendedName>
    <alternativeName>
        <fullName evidence="1">16S rRNA 7-methylguanosine methyltransferase</fullName>
        <shortName evidence="1">16S rRNA m7G methyltransferase</shortName>
    </alternativeName>
</protein>
<dbReference type="EC" id="2.1.1.-" evidence="1"/>
<dbReference type="EMBL" id="CP000419">
    <property type="protein sequence ID" value="ABJ65655.1"/>
    <property type="molecule type" value="Genomic_DNA"/>
</dbReference>
<dbReference type="RefSeq" id="WP_011680736.1">
    <property type="nucleotide sequence ID" value="NC_008532.1"/>
</dbReference>
<dbReference type="SMR" id="Q03MB7"/>
<dbReference type="KEGG" id="ste:STER_0352"/>
<dbReference type="HOGENOM" id="CLU_065341_0_2_9"/>
<dbReference type="GO" id="GO:0005829">
    <property type="term" value="C:cytosol"/>
    <property type="evidence" value="ECO:0007669"/>
    <property type="project" value="TreeGrafter"/>
</dbReference>
<dbReference type="GO" id="GO:0070043">
    <property type="term" value="F:rRNA (guanine-N7-)-methyltransferase activity"/>
    <property type="evidence" value="ECO:0007669"/>
    <property type="project" value="UniProtKB-UniRule"/>
</dbReference>
<dbReference type="CDD" id="cd02440">
    <property type="entry name" value="AdoMet_MTases"/>
    <property type="match status" value="1"/>
</dbReference>
<dbReference type="FunFam" id="3.40.50.150:FF:000041">
    <property type="entry name" value="Ribosomal RNA small subunit methyltransferase G"/>
    <property type="match status" value="1"/>
</dbReference>
<dbReference type="Gene3D" id="3.40.50.150">
    <property type="entry name" value="Vaccinia Virus protein VP39"/>
    <property type="match status" value="1"/>
</dbReference>
<dbReference type="HAMAP" id="MF_00074">
    <property type="entry name" value="16SrRNA_methyltr_G"/>
    <property type="match status" value="1"/>
</dbReference>
<dbReference type="InterPro" id="IPR003682">
    <property type="entry name" value="rRNA_ssu_MeTfrase_G"/>
</dbReference>
<dbReference type="InterPro" id="IPR029063">
    <property type="entry name" value="SAM-dependent_MTases_sf"/>
</dbReference>
<dbReference type="NCBIfam" id="TIGR00138">
    <property type="entry name" value="rsmG_gidB"/>
    <property type="match status" value="1"/>
</dbReference>
<dbReference type="PANTHER" id="PTHR31760">
    <property type="entry name" value="S-ADENOSYL-L-METHIONINE-DEPENDENT METHYLTRANSFERASES SUPERFAMILY PROTEIN"/>
    <property type="match status" value="1"/>
</dbReference>
<dbReference type="PANTHER" id="PTHR31760:SF0">
    <property type="entry name" value="S-ADENOSYL-L-METHIONINE-DEPENDENT METHYLTRANSFERASES SUPERFAMILY PROTEIN"/>
    <property type="match status" value="1"/>
</dbReference>
<dbReference type="Pfam" id="PF02527">
    <property type="entry name" value="GidB"/>
    <property type="match status" value="1"/>
</dbReference>
<dbReference type="SUPFAM" id="SSF53335">
    <property type="entry name" value="S-adenosyl-L-methionine-dependent methyltransferases"/>
    <property type="match status" value="1"/>
</dbReference>
<keyword id="KW-0963">Cytoplasm</keyword>
<keyword id="KW-0489">Methyltransferase</keyword>
<keyword id="KW-0698">rRNA processing</keyword>
<keyword id="KW-0949">S-adenosyl-L-methionine</keyword>
<keyword id="KW-0808">Transferase</keyword>
<accession>Q03MB7</accession>
<proteinExistence type="inferred from homology"/>
<comment type="function">
    <text evidence="1">Specifically methylates the N7 position of a guanine in 16S rRNA.</text>
</comment>
<comment type="subcellular location">
    <subcellularLocation>
        <location evidence="1">Cytoplasm</location>
    </subcellularLocation>
</comment>
<comment type="similarity">
    <text evidence="1">Belongs to the methyltransferase superfamily. RNA methyltransferase RsmG family.</text>
</comment>
<gene>
    <name evidence="1" type="primary">rsmG</name>
    <name type="ordered locus">STER_0352</name>
</gene>
<evidence type="ECO:0000255" key="1">
    <source>
        <dbReference type="HAMAP-Rule" id="MF_00074"/>
    </source>
</evidence>
<reference key="1">
    <citation type="journal article" date="2006" name="Proc. Natl. Acad. Sci. U.S.A.">
        <title>Comparative genomics of the lactic acid bacteria.</title>
        <authorList>
            <person name="Makarova K.S."/>
            <person name="Slesarev A."/>
            <person name="Wolf Y.I."/>
            <person name="Sorokin A."/>
            <person name="Mirkin B."/>
            <person name="Koonin E.V."/>
            <person name="Pavlov A."/>
            <person name="Pavlova N."/>
            <person name="Karamychev V."/>
            <person name="Polouchine N."/>
            <person name="Shakhova V."/>
            <person name="Grigoriev I."/>
            <person name="Lou Y."/>
            <person name="Rohksar D."/>
            <person name="Lucas S."/>
            <person name="Huang K."/>
            <person name="Goodstein D.M."/>
            <person name="Hawkins T."/>
            <person name="Plengvidhya V."/>
            <person name="Welker D."/>
            <person name="Hughes J."/>
            <person name="Goh Y."/>
            <person name="Benson A."/>
            <person name="Baldwin K."/>
            <person name="Lee J.-H."/>
            <person name="Diaz-Muniz I."/>
            <person name="Dosti B."/>
            <person name="Smeianov V."/>
            <person name="Wechter W."/>
            <person name="Barabote R."/>
            <person name="Lorca G."/>
            <person name="Altermann E."/>
            <person name="Barrangou R."/>
            <person name="Ganesan B."/>
            <person name="Xie Y."/>
            <person name="Rawsthorne H."/>
            <person name="Tamir D."/>
            <person name="Parker C."/>
            <person name="Breidt F."/>
            <person name="Broadbent J.R."/>
            <person name="Hutkins R."/>
            <person name="O'Sullivan D."/>
            <person name="Steele J."/>
            <person name="Unlu G."/>
            <person name="Saier M.H. Jr."/>
            <person name="Klaenhammer T."/>
            <person name="Richardson P."/>
            <person name="Kozyavkin S."/>
            <person name="Weimer B.C."/>
            <person name="Mills D.A."/>
        </authorList>
    </citation>
    <scope>NUCLEOTIDE SEQUENCE [LARGE SCALE GENOMIC DNA]</scope>
    <source>
        <strain>ATCC BAA-491 / LMD-9</strain>
    </source>
</reference>